<organism>
    <name type="scientific">Rattus norvegicus</name>
    <name type="common">Rat</name>
    <dbReference type="NCBI Taxonomy" id="10116"/>
    <lineage>
        <taxon>Eukaryota</taxon>
        <taxon>Metazoa</taxon>
        <taxon>Chordata</taxon>
        <taxon>Craniata</taxon>
        <taxon>Vertebrata</taxon>
        <taxon>Euteleostomi</taxon>
        <taxon>Mammalia</taxon>
        <taxon>Eutheria</taxon>
        <taxon>Euarchontoglires</taxon>
        <taxon>Glires</taxon>
        <taxon>Rodentia</taxon>
        <taxon>Myomorpha</taxon>
        <taxon>Muroidea</taxon>
        <taxon>Muridae</taxon>
        <taxon>Murinae</taxon>
        <taxon>Rattus</taxon>
    </lineage>
</organism>
<comment type="function">
    <text evidence="1">Important role in the capacity of milk to transport calcium phosphate.</text>
</comment>
<comment type="subcellular location">
    <subcellularLocation>
        <location>Secreted</location>
    </subcellularLocation>
</comment>
<comment type="tissue specificity">
    <text>Mammary gland specific. Secreted in milk.</text>
</comment>
<comment type="similarity">
    <text evidence="2">Belongs to the alpha-casein family.</text>
</comment>
<feature type="signal peptide" evidence="1">
    <location>
        <begin position="1"/>
        <end position="15"/>
    </location>
</feature>
<feature type="chain" id="PRO_0000269037" description="Alpha-S2-casein-like B">
    <location>
        <begin position="16"/>
        <end position="169"/>
    </location>
</feature>
<reference key="1">
    <citation type="journal article" date="2003" name="Genomics">
        <title>Multispecies comparative analysis of a mammalian-specific genomic domain encoding secretory proteins.</title>
        <authorList>
            <person name="Rijnkels M."/>
            <person name="Elnitski L."/>
            <person name="Miller W."/>
            <person name="Rosen J.M."/>
        </authorList>
    </citation>
    <scope>NUCLEOTIDE SEQUENCE [MRNA]</scope>
    <source>
        <strain>Wistar</strain>
        <tissue>Lactating mammary gland</tissue>
    </source>
</reference>
<keyword id="KW-0494">Milk protein</keyword>
<keyword id="KW-1185">Reference proteome</keyword>
<keyword id="KW-0964">Secreted</keyword>
<keyword id="KW-0732">Signal</keyword>
<dbReference type="EMBL" id="AY154894">
    <property type="protein sequence ID" value="AAN85582.1"/>
    <property type="molecule type" value="mRNA"/>
</dbReference>
<dbReference type="RefSeq" id="NP_775129.1">
    <property type="nucleotide sequence ID" value="NM_173106.2"/>
</dbReference>
<dbReference type="RefSeq" id="XP_063128958.1">
    <property type="nucleotide sequence ID" value="XM_063272888.1"/>
</dbReference>
<dbReference type="SMR" id="Q8CGR3"/>
<dbReference type="STRING" id="10116.ENSRNOP00000068969"/>
<dbReference type="iPTMnet" id="Q8CGR3"/>
<dbReference type="PhosphoSitePlus" id="Q8CGR3"/>
<dbReference type="PaxDb" id="10116-ENSRNOP00000057030"/>
<dbReference type="GeneID" id="286759"/>
<dbReference type="KEGG" id="rno:286759"/>
<dbReference type="UCSC" id="RGD:628794">
    <property type="organism name" value="rat"/>
</dbReference>
<dbReference type="AGR" id="RGD:628794"/>
<dbReference type="CTD" id="12992"/>
<dbReference type="RGD" id="628794">
    <property type="gene designation" value="Csn1s2b"/>
</dbReference>
<dbReference type="InParanoid" id="Q8CGR3"/>
<dbReference type="PhylomeDB" id="Q8CGR3"/>
<dbReference type="TreeFam" id="TF339561"/>
<dbReference type="PRO" id="PR:Q8CGR3"/>
<dbReference type="Proteomes" id="UP000002494">
    <property type="component" value="Unplaced"/>
</dbReference>
<dbReference type="GO" id="GO:0005615">
    <property type="term" value="C:extracellular space"/>
    <property type="evidence" value="ECO:0000318"/>
    <property type="project" value="GO_Central"/>
</dbReference>
<dbReference type="GO" id="GO:0042803">
    <property type="term" value="F:protein homodimerization activity"/>
    <property type="evidence" value="ECO:0000318"/>
    <property type="project" value="GO_Central"/>
</dbReference>
<dbReference type="GO" id="GO:0035375">
    <property type="term" value="F:zymogen binding"/>
    <property type="evidence" value="ECO:0000318"/>
    <property type="project" value="GO_Central"/>
</dbReference>
<dbReference type="InterPro" id="IPR011175">
    <property type="entry name" value="Alpha-s2_casein"/>
</dbReference>
<dbReference type="InterPro" id="IPR001588">
    <property type="entry name" value="Casein"/>
</dbReference>
<dbReference type="InterPro" id="IPR031305">
    <property type="entry name" value="Casein_CS"/>
</dbReference>
<dbReference type="PANTHER" id="PTHR16656">
    <property type="entry name" value="ALPHA-S2-CASEIN-LIKE B"/>
    <property type="match status" value="1"/>
</dbReference>
<dbReference type="PANTHER" id="PTHR16656:SF5">
    <property type="entry name" value="ALPHA-S2-CASEIN-LIKE B"/>
    <property type="match status" value="1"/>
</dbReference>
<dbReference type="Pfam" id="PF00363">
    <property type="entry name" value="Casein"/>
    <property type="match status" value="1"/>
</dbReference>
<dbReference type="PIRSF" id="PIRSF002371">
    <property type="entry name" value="Alpha-s2-casein"/>
    <property type="match status" value="1"/>
</dbReference>
<dbReference type="PROSITE" id="PS00306">
    <property type="entry name" value="CASEIN_ALPHA_BETA"/>
    <property type="match status" value="1"/>
</dbReference>
<evidence type="ECO:0000250" key="1"/>
<evidence type="ECO:0000305" key="2"/>
<accession>Q8CGR3</accession>
<gene>
    <name type="primary">Csn1s2b</name>
    <name type="synonym">Csnd</name>
</gene>
<sequence>MKFIILTCLLAVALAKQESKDNSQEDFKQTVDVVIFPGQETVKNIPIPQMESVEAPIKNKCYQSIQTFKPPQALKGLYQYHMAKNPWGYTVNRAFPSTRTLQYNQKTMDLSMRAREKIVMSEIKKNIQDYVTKMKQYSKITWPRFVKSLQQYQKTMNPWSCYPYTLLQV</sequence>
<proteinExistence type="evidence at transcript level"/>
<protein>
    <recommendedName>
        <fullName>Alpha-S2-casein-like B</fullName>
    </recommendedName>
    <alternativeName>
        <fullName>Casein alpha S2-like B</fullName>
    </alternativeName>
    <alternativeName>
        <fullName>Delta-casein</fullName>
    </alternativeName>
</protein>
<name>CS2LB_RAT</name>